<organism>
    <name type="scientific">Xenopus tropicalis</name>
    <name type="common">Western clawed frog</name>
    <name type="synonym">Silurana tropicalis</name>
    <dbReference type="NCBI Taxonomy" id="8364"/>
    <lineage>
        <taxon>Eukaryota</taxon>
        <taxon>Metazoa</taxon>
        <taxon>Chordata</taxon>
        <taxon>Craniata</taxon>
        <taxon>Vertebrata</taxon>
        <taxon>Euteleostomi</taxon>
        <taxon>Amphibia</taxon>
        <taxon>Batrachia</taxon>
        <taxon>Anura</taxon>
        <taxon>Pipoidea</taxon>
        <taxon>Pipidae</taxon>
        <taxon>Xenopodinae</taxon>
        <taxon>Xenopus</taxon>
        <taxon>Silurana</taxon>
    </lineage>
</organism>
<reference evidence="7" key="1">
    <citation type="submission" date="2006-06" db="EMBL/GenBank/DDBJ databases">
        <authorList>
            <consortium name="Sanger Xenopus tropicalis EST/cDNA project"/>
        </authorList>
    </citation>
    <scope>NUCLEOTIDE SEQUENCE [LARGE SCALE MRNA]</scope>
    <source>
        <tissue evidence="7">Neurula</tissue>
    </source>
</reference>
<reference evidence="7" key="2">
    <citation type="submission" date="2004-12" db="EMBL/GenBank/DDBJ databases">
        <authorList>
            <consortium name="NIH - Xenopus Gene Collection (XGC) project"/>
        </authorList>
    </citation>
    <scope>NUCLEOTIDE SEQUENCE [LARGE SCALE MRNA]</scope>
    <source>
        <tissue evidence="6">Gastrula</tissue>
    </source>
</reference>
<name>FOXD3_XENTR</name>
<evidence type="ECO:0000250" key="1">
    <source>
        <dbReference type="UniProtKB" id="Q9DEN4"/>
    </source>
</evidence>
<evidence type="ECO:0000255" key="2"/>
<evidence type="ECO:0000255" key="3">
    <source>
        <dbReference type="PROSITE-ProRule" id="PRU00089"/>
    </source>
</evidence>
<evidence type="ECO:0000256" key="4">
    <source>
        <dbReference type="SAM" id="MobiDB-lite"/>
    </source>
</evidence>
<evidence type="ECO:0000305" key="5"/>
<evidence type="ECO:0000312" key="6">
    <source>
        <dbReference type="EMBL" id="AAH88566.1"/>
    </source>
</evidence>
<evidence type="ECO:0000312" key="7">
    <source>
        <dbReference type="EMBL" id="CAJ82837.1"/>
    </source>
</evidence>
<accession>Q5M7L9</accession>
<keyword id="KW-0217">Developmental protein</keyword>
<keyword id="KW-0221">Differentiation</keyword>
<keyword id="KW-0238">DNA-binding</keyword>
<keyword id="KW-0524">Neurogenesis</keyword>
<keyword id="KW-0539">Nucleus</keyword>
<keyword id="KW-1185">Reference proteome</keyword>
<keyword id="KW-0678">Repressor</keyword>
<keyword id="KW-0804">Transcription</keyword>
<keyword id="KW-0805">Transcription regulation</keyword>
<gene>
    <name evidence="7" type="primary">foxd3</name>
    <name type="ORF">TNeu088c09.1</name>
</gene>
<dbReference type="EMBL" id="CR760163">
    <property type="protein sequence ID" value="CAJ82837.1"/>
    <property type="molecule type" value="mRNA"/>
</dbReference>
<dbReference type="EMBL" id="BC088566">
    <property type="protein sequence ID" value="AAH88566.1"/>
    <property type="molecule type" value="mRNA"/>
</dbReference>
<dbReference type="RefSeq" id="NP_001011383.1">
    <property type="nucleotide sequence ID" value="NM_001011383.1"/>
</dbReference>
<dbReference type="SMR" id="Q5M7L9"/>
<dbReference type="FunCoup" id="Q5M7L9">
    <property type="interactions" value="960"/>
</dbReference>
<dbReference type="STRING" id="8364.ENSXETP00000041620"/>
<dbReference type="PaxDb" id="8364-ENSXETP00000023699"/>
<dbReference type="DNASU" id="496851"/>
<dbReference type="GeneID" id="496851"/>
<dbReference type="KEGG" id="xtr:496851"/>
<dbReference type="AGR" id="Xenbase:XB-GENE-487289"/>
<dbReference type="CTD" id="27022"/>
<dbReference type="Xenbase" id="XB-GENE-487289">
    <property type="gene designation" value="foxd3"/>
</dbReference>
<dbReference type="eggNOG" id="KOG2294">
    <property type="taxonomic scope" value="Eukaryota"/>
</dbReference>
<dbReference type="HOGENOM" id="CLU_040357_0_1_1"/>
<dbReference type="InParanoid" id="Q5M7L9"/>
<dbReference type="OMA" id="PVQAKWP"/>
<dbReference type="OrthoDB" id="5402974at2759"/>
<dbReference type="PhylomeDB" id="Q5M7L9"/>
<dbReference type="TreeFam" id="TF316127"/>
<dbReference type="Proteomes" id="UP000008143">
    <property type="component" value="Chromosome 4"/>
</dbReference>
<dbReference type="Bgee" id="ENSXETG00000010836">
    <property type="expression patterns" value="Expressed in neurula embryo and 22 other cell types or tissues"/>
</dbReference>
<dbReference type="GO" id="GO:0005634">
    <property type="term" value="C:nucleus"/>
    <property type="evidence" value="ECO:0007669"/>
    <property type="project" value="UniProtKB-SubCell"/>
</dbReference>
<dbReference type="GO" id="GO:0003677">
    <property type="term" value="F:DNA binding"/>
    <property type="evidence" value="ECO:0000250"/>
    <property type="project" value="UniProtKB"/>
</dbReference>
<dbReference type="GO" id="GO:0003700">
    <property type="term" value="F:DNA-binding transcription factor activity"/>
    <property type="evidence" value="ECO:0007669"/>
    <property type="project" value="Ensembl"/>
</dbReference>
<dbReference type="GO" id="GO:0043565">
    <property type="term" value="F:sequence-specific DNA binding"/>
    <property type="evidence" value="ECO:0007669"/>
    <property type="project" value="Ensembl"/>
</dbReference>
<dbReference type="GO" id="GO:0060351">
    <property type="term" value="P:cartilage development involved in endochondral bone morphogenesis"/>
    <property type="evidence" value="ECO:0007669"/>
    <property type="project" value="Ensembl"/>
</dbReference>
<dbReference type="GO" id="GO:0048484">
    <property type="term" value="P:enteric nervous system development"/>
    <property type="evidence" value="ECO:0007669"/>
    <property type="project" value="Ensembl"/>
</dbReference>
<dbReference type="GO" id="GO:0050935">
    <property type="term" value="P:iridophore differentiation"/>
    <property type="evidence" value="ECO:0007669"/>
    <property type="project" value="Ensembl"/>
</dbReference>
<dbReference type="GO" id="GO:0048937">
    <property type="term" value="P:lateral line nerve glial cell development"/>
    <property type="evidence" value="ECO:0007669"/>
    <property type="project" value="Ensembl"/>
</dbReference>
<dbReference type="GO" id="GO:0030318">
    <property type="term" value="P:melanocyte differentiation"/>
    <property type="evidence" value="ECO:0007669"/>
    <property type="project" value="Ensembl"/>
</dbReference>
<dbReference type="GO" id="GO:0045892">
    <property type="term" value="P:negative regulation of DNA-templated transcription"/>
    <property type="evidence" value="ECO:0000250"/>
    <property type="project" value="UniProtKB"/>
</dbReference>
<dbReference type="GO" id="GO:0010629">
    <property type="term" value="P:negative regulation of gene expression"/>
    <property type="evidence" value="ECO:0007669"/>
    <property type="project" value="Ensembl"/>
</dbReference>
<dbReference type="GO" id="GO:0050768">
    <property type="term" value="P:negative regulation of neurogenesis"/>
    <property type="evidence" value="ECO:0000250"/>
    <property type="project" value="UniProtKB"/>
</dbReference>
<dbReference type="GO" id="GO:0014034">
    <property type="term" value="P:neural crest cell fate commitment"/>
    <property type="evidence" value="ECO:0000250"/>
    <property type="project" value="UniProtKB"/>
</dbReference>
<dbReference type="GO" id="GO:0001755">
    <property type="term" value="P:neural crest cell migration"/>
    <property type="evidence" value="ECO:0007669"/>
    <property type="project" value="Ensembl"/>
</dbReference>
<dbReference type="GO" id="GO:0007422">
    <property type="term" value="P:peripheral nervous system development"/>
    <property type="evidence" value="ECO:0007669"/>
    <property type="project" value="Ensembl"/>
</dbReference>
<dbReference type="GO" id="GO:0050769">
    <property type="term" value="P:positive regulation of neurogenesis"/>
    <property type="evidence" value="ECO:0000250"/>
    <property type="project" value="UniProtKB"/>
</dbReference>
<dbReference type="GO" id="GO:0097066">
    <property type="term" value="P:response to thyroid hormone"/>
    <property type="evidence" value="ECO:0007669"/>
    <property type="project" value="Ensembl"/>
</dbReference>
<dbReference type="GO" id="GO:0048485">
    <property type="term" value="P:sympathetic nervous system development"/>
    <property type="evidence" value="ECO:0007669"/>
    <property type="project" value="Ensembl"/>
</dbReference>
<dbReference type="GO" id="GO:0006366">
    <property type="term" value="P:transcription by RNA polymerase II"/>
    <property type="evidence" value="ECO:0007669"/>
    <property type="project" value="Ensembl"/>
</dbReference>
<dbReference type="CDD" id="cd20047">
    <property type="entry name" value="FH_FOXD3"/>
    <property type="match status" value="1"/>
</dbReference>
<dbReference type="FunFam" id="1.10.10.10:FF:000076">
    <property type="entry name" value="Forkhead box protein D3"/>
    <property type="match status" value="1"/>
</dbReference>
<dbReference type="Gene3D" id="1.10.10.10">
    <property type="entry name" value="Winged helix-like DNA-binding domain superfamily/Winged helix DNA-binding domain"/>
    <property type="match status" value="1"/>
</dbReference>
<dbReference type="InterPro" id="IPR047392">
    <property type="entry name" value="FH_FOXD3"/>
</dbReference>
<dbReference type="InterPro" id="IPR001766">
    <property type="entry name" value="Fork_head_dom"/>
</dbReference>
<dbReference type="InterPro" id="IPR050211">
    <property type="entry name" value="FOX_domain-containing"/>
</dbReference>
<dbReference type="InterPro" id="IPR018122">
    <property type="entry name" value="TF_fork_head_CS_1"/>
</dbReference>
<dbReference type="InterPro" id="IPR030456">
    <property type="entry name" value="TF_fork_head_CS_2"/>
</dbReference>
<dbReference type="InterPro" id="IPR036388">
    <property type="entry name" value="WH-like_DNA-bd_sf"/>
</dbReference>
<dbReference type="InterPro" id="IPR036390">
    <property type="entry name" value="WH_DNA-bd_sf"/>
</dbReference>
<dbReference type="PANTHER" id="PTHR11829">
    <property type="entry name" value="FORKHEAD BOX PROTEIN"/>
    <property type="match status" value="1"/>
</dbReference>
<dbReference type="PANTHER" id="PTHR11829:SF361">
    <property type="entry name" value="FORKHEAD BOX PROTEIN D4-LIKE 1"/>
    <property type="match status" value="1"/>
</dbReference>
<dbReference type="Pfam" id="PF00250">
    <property type="entry name" value="Forkhead"/>
    <property type="match status" value="1"/>
</dbReference>
<dbReference type="PRINTS" id="PR00053">
    <property type="entry name" value="FORKHEAD"/>
</dbReference>
<dbReference type="SMART" id="SM00339">
    <property type="entry name" value="FH"/>
    <property type="match status" value="1"/>
</dbReference>
<dbReference type="SUPFAM" id="SSF46785">
    <property type="entry name" value="Winged helix' DNA-binding domain"/>
    <property type="match status" value="1"/>
</dbReference>
<dbReference type="PROSITE" id="PS00657">
    <property type="entry name" value="FORK_HEAD_1"/>
    <property type="match status" value="1"/>
</dbReference>
<dbReference type="PROSITE" id="PS00658">
    <property type="entry name" value="FORK_HEAD_2"/>
    <property type="match status" value="1"/>
</dbReference>
<dbReference type="PROSITE" id="PS50039">
    <property type="entry name" value="FORK_HEAD_3"/>
    <property type="match status" value="1"/>
</dbReference>
<sequence>MTLSGSSSASDMSGQTVLSADDADIDVVGEGDEPLDKDSECGSPAGHAEEADELGGKEIARSPSGSANEAEGKGESQQQEGMQNKPKNSLVKPPYSYIALITMAILQSPQKKLTLSGICEFISNRFPYYREKFPAWQNSIRHNLSLNDCFVKIPREPGNPGKGNYWTLDPQSEDMFDNGSFLRRRKRFKRQQPDSLREQTALMMQSFGAYSLAGPYGRPYGLHPAAYTHPAALQYPYIPPVGPMLPPAVPLLPSSELSRKAFSSQLSPSLQLQLSSLSSTAASIIKSEPSSRPSFSIENIIGVSAASSIAPQTFLRPPVTVQSALMSHQPLALSRSTAAIGPILSVPTNLISGQFLPTAAAAVAKWPAQ</sequence>
<proteinExistence type="evidence at transcript level"/>
<feature type="chain" id="PRO_0000250610" description="Forkhead box protein D3">
    <location>
        <begin position="1"/>
        <end position="369"/>
    </location>
</feature>
<feature type="DNA-binding region" description="Fork-head" evidence="3">
    <location>
        <begin position="92"/>
        <end position="186"/>
    </location>
</feature>
<feature type="region of interest" description="Disordered" evidence="4">
    <location>
        <begin position="1"/>
        <end position="89"/>
    </location>
</feature>
<feature type="compositionally biased region" description="Low complexity" evidence="4">
    <location>
        <begin position="1"/>
        <end position="13"/>
    </location>
</feature>
<feature type="compositionally biased region" description="Acidic residues" evidence="4">
    <location>
        <begin position="21"/>
        <end position="33"/>
    </location>
</feature>
<feature type="compositionally biased region" description="Polar residues" evidence="4">
    <location>
        <begin position="75"/>
        <end position="87"/>
    </location>
</feature>
<comment type="function">
    <text evidence="1">Transcriptional repressor that is an essential upstream regulator of neural crest determination. Also acts in a negative auto-regulator loop by inhibiting the transcription of its own gene (By similarity).</text>
</comment>
<comment type="subcellular location">
    <subcellularLocation>
        <location evidence="2 5">Nucleus</location>
    </subcellularLocation>
</comment>
<protein>
    <recommendedName>
        <fullName>Forkhead box protein D3</fullName>
        <shortName>FoxD3</shortName>
    </recommendedName>
</protein>